<proteinExistence type="inferred from homology"/>
<keyword id="KW-0963">Cytoplasm</keyword>
<keyword id="KW-0408">Iron</keyword>
<keyword id="KW-0411">Iron-sulfur</keyword>
<keyword id="KW-0479">Metal-binding</keyword>
<keyword id="KW-1185">Reference proteome</keyword>
<keyword id="KW-0949">S-adenosyl-L-methionine</keyword>
<keyword id="KW-0808">Transferase</keyword>
<sequence>MAEVKKSIPKRRFVGKKNRKENNLDGSNRDVENAALVTINSKRSAGRVATQIPEDILNDKAINEAIKLLPQNYNFEIHKTIWHIRLRKAKRVALQLPEGLLMFGCILSDIFEQFCQVETIVMGDVTYGACCIDDFTARALDCDFLVHYGHSCLIPVDQTPIKVLYVFVDIKIDLQHVVSSLKHNLPSNSRLALVGTIQFVGSLNSIKDALQIQDEDGKGGFYVVIPQAKPLSPGEALGCTSPYIEKGSVDALIYIGDGRFHLESVMIANPDLPAYRYDPYSHKLSIESYAHEEMKSIRYSAVEKARTAKKFGLIQGTLGRQGSPKVLENLKNTLRKNNKDFVCVLMSEIFPSRLGQFSDIDAWIQVACPRLSIDWGYAFPAPLLTPYEASAAFNVVPWKEVYPMDFYATNSLGNWTPNNPENRPLPNRKKTGPVSS</sequence>
<name>DPH1_SCHPO</name>
<evidence type="ECO:0000250" key="1">
    <source>
        <dbReference type="UniProtKB" id="O58832"/>
    </source>
</evidence>
<evidence type="ECO:0000250" key="2">
    <source>
        <dbReference type="UniProtKB" id="P40487"/>
    </source>
</evidence>
<evidence type="ECO:0000256" key="3">
    <source>
        <dbReference type="SAM" id="MobiDB-lite"/>
    </source>
</evidence>
<evidence type="ECO:0000269" key="4">
    <source>
    </source>
</evidence>
<evidence type="ECO:0000305" key="5"/>
<comment type="function">
    <text evidence="2">Catalyzes the first step of diphthamide biosynthesis, a post-translational modification of histidine which occurs in elongation factor 2. Dph1 and dph2 transfer a 3-amino-3-carboxypropyl (ACP) group from S-adenosyl-L-methionine (SAM) to a histidine residue, the reaction is assisted by a reduction system comprising dph3 and a NADH-dependent reductase, predominantly cbr1.</text>
</comment>
<comment type="catalytic activity">
    <reaction evidence="2">
        <text>L-histidyl-[translation elongation factor 2] + S-adenosyl-L-methionine = 2-[(3S)-amino-3-carboxypropyl]-L-histidyl-[translation elongation factor 2] + S-methyl-5'-thioadenosine + H(+)</text>
        <dbReference type="Rhea" id="RHEA:36783"/>
        <dbReference type="Rhea" id="RHEA-COMP:9748"/>
        <dbReference type="Rhea" id="RHEA-COMP:9749"/>
        <dbReference type="ChEBI" id="CHEBI:15378"/>
        <dbReference type="ChEBI" id="CHEBI:17509"/>
        <dbReference type="ChEBI" id="CHEBI:29979"/>
        <dbReference type="ChEBI" id="CHEBI:59789"/>
        <dbReference type="ChEBI" id="CHEBI:73995"/>
        <dbReference type="EC" id="2.5.1.108"/>
    </reaction>
</comment>
<comment type="cofactor">
    <cofactor evidence="2">
        <name>[4Fe-4S] cluster</name>
        <dbReference type="ChEBI" id="CHEBI:49883"/>
    </cofactor>
    <text evidence="2">Binds 1 [4Fe-4S] cluster per subunit. The cluster is coordinated with 3 cysteines and an exchangeable S-adenosyl-L-methionine.</text>
</comment>
<comment type="pathway">
    <text evidence="2">Protein modification; peptidyl-diphthamide biosynthesis.</text>
</comment>
<comment type="subunit">
    <text evidence="2">Component of the 2-(3-amino-3-carboxypropyl)histidine synthase complex composed of dph1, dph2, dph3 and a NADH-dependent reductase, predominantly cbr1.</text>
</comment>
<comment type="subcellular location">
    <subcellularLocation>
        <location evidence="2">Cytoplasm</location>
    </subcellularLocation>
</comment>
<comment type="disruption phenotype">
    <text evidence="4">Sensitive to methyl methanesulfonate (MMS, causes DNA breaks) and hydroxyurea (HU, ribonucleotide reductase inhibitor).</text>
</comment>
<comment type="similarity">
    <text evidence="5">Belongs to the DPH1/DPH2 family. DPH1 subfamily.</text>
</comment>
<gene>
    <name type="primary">dph1</name>
    <name type="ORF">SPBC3B8.05</name>
</gene>
<organism>
    <name type="scientific">Schizosaccharomyces pombe (strain 972 / ATCC 24843)</name>
    <name type="common">Fission yeast</name>
    <dbReference type="NCBI Taxonomy" id="284812"/>
    <lineage>
        <taxon>Eukaryota</taxon>
        <taxon>Fungi</taxon>
        <taxon>Dikarya</taxon>
        <taxon>Ascomycota</taxon>
        <taxon>Taphrinomycotina</taxon>
        <taxon>Schizosaccharomycetes</taxon>
        <taxon>Schizosaccharomycetales</taxon>
        <taxon>Schizosaccharomycetaceae</taxon>
        <taxon>Schizosaccharomyces</taxon>
    </lineage>
</organism>
<dbReference type="EC" id="2.5.1.108" evidence="2"/>
<dbReference type="EMBL" id="CU329671">
    <property type="protein sequence ID" value="CAA18294.1"/>
    <property type="molecule type" value="Genomic_DNA"/>
</dbReference>
<dbReference type="PIR" id="T40335">
    <property type="entry name" value="T40335"/>
</dbReference>
<dbReference type="RefSeq" id="NP_596409.1">
    <property type="nucleotide sequence ID" value="NM_001022328.2"/>
</dbReference>
<dbReference type="SMR" id="O59713"/>
<dbReference type="BioGRID" id="276826">
    <property type="interactions" value="14"/>
</dbReference>
<dbReference type="FunCoup" id="O59713">
    <property type="interactions" value="377"/>
</dbReference>
<dbReference type="STRING" id="284812.O59713"/>
<dbReference type="iPTMnet" id="O59713"/>
<dbReference type="PaxDb" id="4896-SPBC3B8.05.1"/>
<dbReference type="EnsemblFungi" id="SPBC3B8.05.1">
    <property type="protein sequence ID" value="SPBC3B8.05.1:pep"/>
    <property type="gene ID" value="SPBC3B8.05"/>
</dbReference>
<dbReference type="GeneID" id="2540295"/>
<dbReference type="KEGG" id="spo:2540295"/>
<dbReference type="PomBase" id="SPBC3B8.05">
    <property type="gene designation" value="dph1"/>
</dbReference>
<dbReference type="VEuPathDB" id="FungiDB:SPBC3B8.05"/>
<dbReference type="eggNOG" id="KOG2648">
    <property type="taxonomic scope" value="Eukaryota"/>
</dbReference>
<dbReference type="HOGENOM" id="CLU_037146_1_1_1"/>
<dbReference type="InParanoid" id="O59713"/>
<dbReference type="OMA" id="PGQVLGC"/>
<dbReference type="PhylomeDB" id="O59713"/>
<dbReference type="Reactome" id="R-SPO-5358493">
    <property type="pathway name" value="Synthesis of diphthamide-EEF2"/>
</dbReference>
<dbReference type="UniPathway" id="UPA00559"/>
<dbReference type="PRO" id="PR:O59713"/>
<dbReference type="Proteomes" id="UP000002485">
    <property type="component" value="Chromosome II"/>
</dbReference>
<dbReference type="GO" id="GO:0120513">
    <property type="term" value="C:2-(3-amino-3-carboxypropyl)histidine synthase complex"/>
    <property type="evidence" value="ECO:0000250"/>
    <property type="project" value="UniProtKB"/>
</dbReference>
<dbReference type="GO" id="GO:0005829">
    <property type="term" value="C:cytosol"/>
    <property type="evidence" value="ECO:0007005"/>
    <property type="project" value="PomBase"/>
</dbReference>
<dbReference type="GO" id="GO:0005634">
    <property type="term" value="C:nucleus"/>
    <property type="evidence" value="ECO:0007005"/>
    <property type="project" value="PomBase"/>
</dbReference>
<dbReference type="GO" id="GO:0090560">
    <property type="term" value="F:2-(3-amino-3-carboxypropyl)histidine synthase activity"/>
    <property type="evidence" value="ECO:0007669"/>
    <property type="project" value="UniProtKB-EC"/>
</dbReference>
<dbReference type="GO" id="GO:0051539">
    <property type="term" value="F:4 iron, 4 sulfur cluster binding"/>
    <property type="evidence" value="ECO:0000250"/>
    <property type="project" value="UniProtKB"/>
</dbReference>
<dbReference type="GO" id="GO:0046872">
    <property type="term" value="F:metal ion binding"/>
    <property type="evidence" value="ECO:0007669"/>
    <property type="project" value="UniProtKB-KW"/>
</dbReference>
<dbReference type="GO" id="GO:0017183">
    <property type="term" value="P:protein histidyl modification to diphthamide"/>
    <property type="evidence" value="ECO:0000250"/>
    <property type="project" value="UniProtKB"/>
</dbReference>
<dbReference type="GO" id="GO:2000765">
    <property type="term" value="P:regulation of cytoplasmic translation"/>
    <property type="evidence" value="ECO:0000305"/>
    <property type="project" value="PomBase"/>
</dbReference>
<dbReference type="FunFam" id="3.40.50.11840:FF:000001">
    <property type="entry name" value="2-(3-amino-3-carboxypropyl)histidine synthase subunit 1"/>
    <property type="match status" value="1"/>
</dbReference>
<dbReference type="FunFam" id="3.40.50.11850:FF:000002">
    <property type="entry name" value="2-(3-amino-3-carboxypropyl)histidine synthase subunit 1"/>
    <property type="match status" value="1"/>
</dbReference>
<dbReference type="FunFam" id="3.40.50.11860:FF:000002">
    <property type="entry name" value="2-(3-amino-3-carboxypropyl)histidine synthase subunit 1"/>
    <property type="match status" value="1"/>
</dbReference>
<dbReference type="Gene3D" id="3.40.50.11840">
    <property type="entry name" value="Diphthamide synthesis DPH1/DPH2 domain 1"/>
    <property type="match status" value="1"/>
</dbReference>
<dbReference type="Gene3D" id="3.40.50.11850">
    <property type="entry name" value="Diphthamide synthesis DPH1/DPH2 domain 2"/>
    <property type="match status" value="1"/>
</dbReference>
<dbReference type="Gene3D" id="3.40.50.11860">
    <property type="entry name" value="Diphthamide synthesis DPH1/DPH2 domain 3"/>
    <property type="match status" value="1"/>
</dbReference>
<dbReference type="InterPro" id="IPR016435">
    <property type="entry name" value="DPH1/DPH2"/>
</dbReference>
<dbReference type="InterPro" id="IPR042263">
    <property type="entry name" value="DPH1/DPH2_1"/>
</dbReference>
<dbReference type="InterPro" id="IPR042264">
    <property type="entry name" value="DPH1/DPH2_2"/>
</dbReference>
<dbReference type="InterPro" id="IPR042265">
    <property type="entry name" value="DPH1/DPH2_3"/>
</dbReference>
<dbReference type="InterPro" id="IPR035435">
    <property type="entry name" value="DPH1/DPH2_euk_archaea"/>
</dbReference>
<dbReference type="NCBIfam" id="TIGR00322">
    <property type="entry name" value="diphth2_R"/>
    <property type="match status" value="1"/>
</dbReference>
<dbReference type="PANTHER" id="PTHR10762:SF1">
    <property type="entry name" value="2-(3-AMINO-3-CARBOXYPROPYL)HISTIDINE SYNTHASE SUBUNIT 1"/>
    <property type="match status" value="1"/>
</dbReference>
<dbReference type="PANTHER" id="PTHR10762">
    <property type="entry name" value="DIPHTHAMIDE BIOSYNTHESIS PROTEIN"/>
    <property type="match status" value="1"/>
</dbReference>
<dbReference type="Pfam" id="PF01866">
    <property type="entry name" value="Diphthamide_syn"/>
    <property type="match status" value="1"/>
</dbReference>
<dbReference type="PIRSF" id="PIRSF004967">
    <property type="entry name" value="DPH1"/>
    <property type="match status" value="1"/>
</dbReference>
<dbReference type="SFLD" id="SFLDG01121">
    <property type="entry name" value="Diphthamide_biosynthesis"/>
    <property type="match status" value="1"/>
</dbReference>
<dbReference type="SFLD" id="SFLDS00032">
    <property type="entry name" value="Radical_SAM_3-amino-3-carboxyp"/>
    <property type="match status" value="1"/>
</dbReference>
<protein>
    <recommendedName>
        <fullName evidence="5">2-(3-amino-3-carboxypropyl)histidine synthase subunit 1</fullName>
        <ecNumber evidence="2">2.5.1.108</ecNumber>
    </recommendedName>
    <alternativeName>
        <fullName>Diphthamide biosynthesis protein 1</fullName>
    </alternativeName>
    <alternativeName>
        <fullName evidence="5">Diphtheria toxin resistance protein 1</fullName>
    </alternativeName>
    <alternativeName>
        <fullName evidence="5">S-adenosyl-L-methionine:L-histidine 3-amino-3-carboxypropyltransferase 1</fullName>
    </alternativeName>
</protein>
<accession>O59713</accession>
<reference key="1">
    <citation type="journal article" date="2002" name="Nature">
        <title>The genome sequence of Schizosaccharomyces pombe.</title>
        <authorList>
            <person name="Wood V."/>
            <person name="Gwilliam R."/>
            <person name="Rajandream M.A."/>
            <person name="Lyne M.H."/>
            <person name="Lyne R."/>
            <person name="Stewart A."/>
            <person name="Sgouros J.G."/>
            <person name="Peat N."/>
            <person name="Hayles J."/>
            <person name="Baker S.G."/>
            <person name="Basham D."/>
            <person name="Bowman S."/>
            <person name="Brooks K."/>
            <person name="Brown D."/>
            <person name="Brown S."/>
            <person name="Chillingworth T."/>
            <person name="Churcher C.M."/>
            <person name="Collins M."/>
            <person name="Connor R."/>
            <person name="Cronin A."/>
            <person name="Davis P."/>
            <person name="Feltwell T."/>
            <person name="Fraser A."/>
            <person name="Gentles S."/>
            <person name="Goble A."/>
            <person name="Hamlin N."/>
            <person name="Harris D.E."/>
            <person name="Hidalgo J."/>
            <person name="Hodgson G."/>
            <person name="Holroyd S."/>
            <person name="Hornsby T."/>
            <person name="Howarth S."/>
            <person name="Huckle E.J."/>
            <person name="Hunt S."/>
            <person name="Jagels K."/>
            <person name="James K.D."/>
            <person name="Jones L."/>
            <person name="Jones M."/>
            <person name="Leather S."/>
            <person name="McDonald S."/>
            <person name="McLean J."/>
            <person name="Mooney P."/>
            <person name="Moule S."/>
            <person name="Mungall K.L."/>
            <person name="Murphy L.D."/>
            <person name="Niblett D."/>
            <person name="Odell C."/>
            <person name="Oliver K."/>
            <person name="O'Neil S."/>
            <person name="Pearson D."/>
            <person name="Quail M.A."/>
            <person name="Rabbinowitsch E."/>
            <person name="Rutherford K.M."/>
            <person name="Rutter S."/>
            <person name="Saunders D."/>
            <person name="Seeger K."/>
            <person name="Sharp S."/>
            <person name="Skelton J."/>
            <person name="Simmonds M.N."/>
            <person name="Squares R."/>
            <person name="Squares S."/>
            <person name="Stevens K."/>
            <person name="Taylor K."/>
            <person name="Taylor R.G."/>
            <person name="Tivey A."/>
            <person name="Walsh S.V."/>
            <person name="Warren T."/>
            <person name="Whitehead S."/>
            <person name="Woodward J.R."/>
            <person name="Volckaert G."/>
            <person name="Aert R."/>
            <person name="Robben J."/>
            <person name="Grymonprez B."/>
            <person name="Weltjens I."/>
            <person name="Vanstreels E."/>
            <person name="Rieger M."/>
            <person name="Schaefer M."/>
            <person name="Mueller-Auer S."/>
            <person name="Gabel C."/>
            <person name="Fuchs M."/>
            <person name="Duesterhoeft A."/>
            <person name="Fritzc C."/>
            <person name="Holzer E."/>
            <person name="Moestl D."/>
            <person name="Hilbert H."/>
            <person name="Borzym K."/>
            <person name="Langer I."/>
            <person name="Beck A."/>
            <person name="Lehrach H."/>
            <person name="Reinhardt R."/>
            <person name="Pohl T.M."/>
            <person name="Eger P."/>
            <person name="Zimmermann W."/>
            <person name="Wedler H."/>
            <person name="Wambutt R."/>
            <person name="Purnelle B."/>
            <person name="Goffeau A."/>
            <person name="Cadieu E."/>
            <person name="Dreano S."/>
            <person name="Gloux S."/>
            <person name="Lelaure V."/>
            <person name="Mottier S."/>
            <person name="Galibert F."/>
            <person name="Aves S.J."/>
            <person name="Xiang Z."/>
            <person name="Hunt C."/>
            <person name="Moore K."/>
            <person name="Hurst S.M."/>
            <person name="Lucas M."/>
            <person name="Rochet M."/>
            <person name="Gaillardin C."/>
            <person name="Tallada V.A."/>
            <person name="Garzon A."/>
            <person name="Thode G."/>
            <person name="Daga R.R."/>
            <person name="Cruzado L."/>
            <person name="Jimenez J."/>
            <person name="Sanchez M."/>
            <person name="del Rey F."/>
            <person name="Benito J."/>
            <person name="Dominguez A."/>
            <person name="Revuelta J.L."/>
            <person name="Moreno S."/>
            <person name="Armstrong J."/>
            <person name="Forsburg S.L."/>
            <person name="Cerutti L."/>
            <person name="Lowe T."/>
            <person name="McCombie W.R."/>
            <person name="Paulsen I."/>
            <person name="Potashkin J."/>
            <person name="Shpakovski G.V."/>
            <person name="Ussery D."/>
            <person name="Barrell B.G."/>
            <person name="Nurse P."/>
        </authorList>
    </citation>
    <scope>NUCLEOTIDE SEQUENCE [LARGE SCALE GENOMIC DNA]</scope>
    <source>
        <strain>972 / ATCC 24843</strain>
    </source>
</reference>
<reference key="2">
    <citation type="journal article" date="2017" name="Sci. Rep.">
        <title>Elp3 and Dph3 of Schizosaccharomyces pombe mediate cellular stress responses through tRNALysUUU modifications.</title>
        <authorList>
            <person name="Villahermosa D."/>
            <person name="Fleck O."/>
        </authorList>
    </citation>
    <scope>DISRUPTION PHENOTYPE</scope>
</reference>
<feature type="chain" id="PRO_0000083378" description="2-(3-amino-3-carboxypropyl)histidine synthase subunit 1">
    <location>
        <begin position="1"/>
        <end position="436"/>
    </location>
</feature>
<feature type="region of interest" description="Disordered" evidence="3">
    <location>
        <begin position="1"/>
        <end position="27"/>
    </location>
</feature>
<feature type="region of interest" description="Disordered" evidence="3">
    <location>
        <begin position="417"/>
        <end position="436"/>
    </location>
</feature>
<feature type="compositionally biased region" description="Basic residues" evidence="3">
    <location>
        <begin position="7"/>
        <end position="19"/>
    </location>
</feature>
<feature type="compositionally biased region" description="Basic residues" evidence="3">
    <location>
        <begin position="426"/>
        <end position="436"/>
    </location>
</feature>
<feature type="binding site" evidence="1">
    <location>
        <position position="130"/>
    </location>
    <ligand>
        <name>[4Fe-4S] cluster</name>
        <dbReference type="ChEBI" id="CHEBI:49883"/>
    </ligand>
</feature>
<feature type="binding site" evidence="1">
    <location>
        <position position="239"/>
    </location>
    <ligand>
        <name>[4Fe-4S] cluster</name>
        <dbReference type="ChEBI" id="CHEBI:49883"/>
    </ligand>
</feature>
<feature type="binding site" evidence="1">
    <location>
        <position position="368"/>
    </location>
    <ligand>
        <name>[4Fe-4S] cluster</name>
        <dbReference type="ChEBI" id="CHEBI:49883"/>
    </ligand>
</feature>